<sequence>MSLHSTFKKISPTTLLKQEDWEGLCLYFSQHPEKVRDSAGNEQNIILFAIACLRKDETDVGLTLLSDRVLTAKNGRDLLRRWVISPLASSQPDAVLQVVNKLLAVNVCQPEDVLLVASVLLKSKQYATVADLAEQAWLAFSGNSQIFALHLRTLVLMDKELQAISLARTQAQEVPPRGDMIATCLSFLNKSRLPEDHDLARALLPFFALERQESAGLAVDTLCAVGKYQEAIQTGESALARGLDGAALRRSLGLAYYQSGRSREAKLQAAEHWRHALQFNSDNVRIVTLYADALIRTGQNEKAIPLLQQSLATHPDLPYVRAMYARALRQVGQYTAASDEFVQLAREKGVTSKWNRYAAAALLQAGKTSEAESVFEHYIQARASHLPQSFEEGLLALDGQISAVNLPPERLDWAWEVAGRQSGIERDEWERRAKWGYLADNFLLDWLECRGEQADEPMYRLADISHVEQFFQRLQLDQRGCIIVSAHLGAMYAGPMILSLLEMNSKWVASTPGVLKGGYGERLISVSDKSEADVVRACMQTLHSGQSLVVAIDGALNLSAPTIDFFGQQITYSTFCSRLAWKMHLPTVFSVPIWKNRHIHFVLERMVDPLKFESQLSFTERWKENYLQCVTRILQSDPENLRLSGGIWRNIIRRDS</sequence>
<organism>
    <name type="scientific">Salmonella typhi</name>
    <dbReference type="NCBI Taxonomy" id="90370"/>
    <lineage>
        <taxon>Bacteria</taxon>
        <taxon>Pseudomonadati</taxon>
        <taxon>Pseudomonadota</taxon>
        <taxon>Gammaproteobacteria</taxon>
        <taxon>Enterobacterales</taxon>
        <taxon>Enterobacteriaceae</taxon>
        <taxon>Salmonella</taxon>
    </lineage>
</organism>
<gene>
    <name type="primary">vexE</name>
    <name type="ordered locus">STY4651</name>
    <name type="ordered locus">t4344</name>
</gene>
<proteinExistence type="predicted"/>
<accession>P43112</accession>
<feature type="chain" id="PRO_0000065782" description="Vi polysaccharide export protein VexE">
    <location>
        <begin position="1"/>
        <end position="656"/>
    </location>
</feature>
<comment type="function">
    <text>May be involved in translocation of the Vi antigen.</text>
</comment>
<name>VEXE_SALTI</name>
<protein>
    <recommendedName>
        <fullName>Vi polysaccharide export protein VexE</fullName>
    </recommendedName>
</protein>
<dbReference type="EMBL" id="D14156">
    <property type="protein sequence ID" value="BAA03200.1"/>
    <property type="molecule type" value="Genomic_DNA"/>
</dbReference>
<dbReference type="EMBL" id="AL513382">
    <property type="protein sequence ID" value="CAD06771.1"/>
    <property type="molecule type" value="Genomic_DNA"/>
</dbReference>
<dbReference type="EMBL" id="AE014613">
    <property type="protein sequence ID" value="AAO71797.1"/>
    <property type="molecule type" value="Genomic_DNA"/>
</dbReference>
<dbReference type="PIR" id="A56975">
    <property type="entry name" value="A56975"/>
</dbReference>
<dbReference type="RefSeq" id="NP_458730.1">
    <property type="nucleotide sequence ID" value="NC_003198.1"/>
</dbReference>
<dbReference type="RefSeq" id="WP_000052242.1">
    <property type="nucleotide sequence ID" value="NZ_WSUR01000012.1"/>
</dbReference>
<dbReference type="SMR" id="P43112"/>
<dbReference type="STRING" id="220341.gene:17588468"/>
<dbReference type="KEGG" id="stt:t4344"/>
<dbReference type="KEGG" id="sty:STY4651"/>
<dbReference type="PATRIC" id="fig|220341.7.peg.4750"/>
<dbReference type="eggNOG" id="COG1560">
    <property type="taxonomic scope" value="Bacteria"/>
</dbReference>
<dbReference type="eggNOG" id="COG4783">
    <property type="taxonomic scope" value="Bacteria"/>
</dbReference>
<dbReference type="HOGENOM" id="CLU_415447_0_0_6"/>
<dbReference type="OMA" id="DWLECRE"/>
<dbReference type="OrthoDB" id="8978942at2"/>
<dbReference type="Proteomes" id="UP000000541">
    <property type="component" value="Chromosome"/>
</dbReference>
<dbReference type="Proteomes" id="UP000002670">
    <property type="component" value="Chromosome"/>
</dbReference>
<dbReference type="GO" id="GO:0015774">
    <property type="term" value="P:polysaccharide transport"/>
    <property type="evidence" value="ECO:0007669"/>
    <property type="project" value="UniProtKB-KW"/>
</dbReference>
<dbReference type="Gene3D" id="1.25.40.10">
    <property type="entry name" value="Tetratricopeptide repeat domain"/>
    <property type="match status" value="1"/>
</dbReference>
<dbReference type="InterPro" id="IPR011990">
    <property type="entry name" value="TPR-like_helical_dom_sf"/>
</dbReference>
<dbReference type="NCBIfam" id="NF011721">
    <property type="entry name" value="PRK15174.1"/>
    <property type="match status" value="1"/>
</dbReference>
<dbReference type="Pfam" id="PF14559">
    <property type="entry name" value="TPR_19"/>
    <property type="match status" value="1"/>
</dbReference>
<dbReference type="SUPFAM" id="SSF48452">
    <property type="entry name" value="TPR-like"/>
    <property type="match status" value="1"/>
</dbReference>
<dbReference type="PROSITE" id="PS50293">
    <property type="entry name" value="TPR_REGION"/>
    <property type="match status" value="1"/>
</dbReference>
<reference key="1">
    <citation type="journal article" date="1993" name="J. Bacteriol.">
        <title>Complete nucleotide sequence and molecular characterization of ViaB region encoding Vi antigen in Salmonella typhi.</title>
        <authorList>
            <person name="Hashimoto Y."/>
            <person name="Li N."/>
            <person name="Yokoyama H."/>
            <person name="Ezaki T."/>
        </authorList>
    </citation>
    <scope>NUCLEOTIDE SEQUENCE [GENOMIC DNA]</scope>
    <source>
        <strain>GIFU 10007</strain>
    </source>
</reference>
<reference key="2">
    <citation type="journal article" date="2001" name="Nature">
        <title>Complete genome sequence of a multiple drug resistant Salmonella enterica serovar Typhi CT18.</title>
        <authorList>
            <person name="Parkhill J."/>
            <person name="Dougan G."/>
            <person name="James K.D."/>
            <person name="Thomson N.R."/>
            <person name="Pickard D."/>
            <person name="Wain J."/>
            <person name="Churcher C.M."/>
            <person name="Mungall K.L."/>
            <person name="Bentley S.D."/>
            <person name="Holden M.T.G."/>
            <person name="Sebaihia M."/>
            <person name="Baker S."/>
            <person name="Basham D."/>
            <person name="Brooks K."/>
            <person name="Chillingworth T."/>
            <person name="Connerton P."/>
            <person name="Cronin A."/>
            <person name="Davis P."/>
            <person name="Davies R.M."/>
            <person name="Dowd L."/>
            <person name="White N."/>
            <person name="Farrar J."/>
            <person name="Feltwell T."/>
            <person name="Hamlin N."/>
            <person name="Haque A."/>
            <person name="Hien T.T."/>
            <person name="Holroyd S."/>
            <person name="Jagels K."/>
            <person name="Krogh A."/>
            <person name="Larsen T.S."/>
            <person name="Leather S."/>
            <person name="Moule S."/>
            <person name="O'Gaora P."/>
            <person name="Parry C."/>
            <person name="Quail M.A."/>
            <person name="Rutherford K.M."/>
            <person name="Simmonds M."/>
            <person name="Skelton J."/>
            <person name="Stevens K."/>
            <person name="Whitehead S."/>
            <person name="Barrell B.G."/>
        </authorList>
    </citation>
    <scope>NUCLEOTIDE SEQUENCE [LARGE SCALE GENOMIC DNA]</scope>
    <source>
        <strain>CT18</strain>
    </source>
</reference>
<reference key="3">
    <citation type="journal article" date="2003" name="J. Bacteriol.">
        <title>Comparative genomics of Salmonella enterica serovar Typhi strains Ty2 and CT18.</title>
        <authorList>
            <person name="Deng W."/>
            <person name="Liou S.-R."/>
            <person name="Plunkett G. III"/>
            <person name="Mayhew G.F."/>
            <person name="Rose D.J."/>
            <person name="Burland V."/>
            <person name="Kodoyianni V."/>
            <person name="Schwartz D.C."/>
            <person name="Blattner F.R."/>
        </authorList>
    </citation>
    <scope>NUCLEOTIDE SEQUENCE [LARGE SCALE GENOMIC DNA]</scope>
    <source>
        <strain>ATCC 700931 / Ty2</strain>
    </source>
</reference>
<keyword id="KW-0625">Polysaccharide transport</keyword>
<keyword id="KW-0762">Sugar transport</keyword>
<keyword id="KW-0813">Transport</keyword>